<sequence length="115" mass="12397">MLDKIKNLSELLSNMGALREKMEDVKKRIASIRVVGDAGAGMVTVTATGEGQIINVFINKQLFDSDDNKMLEDLVMAATNDALKKAKEATAYEFQAASGGLDFSEISKMFGGNFG</sequence>
<gene>
    <name type="ordered locus">LBJ_3002</name>
</gene>
<accession>Q04NY0</accession>
<name>Y3002_LEPBJ</name>
<evidence type="ECO:0000255" key="1">
    <source>
        <dbReference type="HAMAP-Rule" id="MF_00274"/>
    </source>
</evidence>
<reference key="1">
    <citation type="journal article" date="2006" name="Proc. Natl. Acad. Sci. U.S.A.">
        <title>Genome reduction in Leptospira borgpetersenii reflects limited transmission potential.</title>
        <authorList>
            <person name="Bulach D.M."/>
            <person name="Zuerner R.L."/>
            <person name="Wilson P."/>
            <person name="Seemann T."/>
            <person name="McGrath A."/>
            <person name="Cullen P.A."/>
            <person name="Davis J."/>
            <person name="Johnson M."/>
            <person name="Kuczek E."/>
            <person name="Alt D.P."/>
            <person name="Peterson-Burch B."/>
            <person name="Coppel R.L."/>
            <person name="Rood J.I."/>
            <person name="Davies J.K."/>
            <person name="Adler B."/>
        </authorList>
    </citation>
    <scope>NUCLEOTIDE SEQUENCE [LARGE SCALE GENOMIC DNA]</scope>
    <source>
        <strain>JB197</strain>
    </source>
</reference>
<protein>
    <recommendedName>
        <fullName evidence="1">Nucleoid-associated protein LBJ_3002</fullName>
    </recommendedName>
</protein>
<organism>
    <name type="scientific">Leptospira borgpetersenii serovar Hardjo-bovis (strain JB197)</name>
    <dbReference type="NCBI Taxonomy" id="355277"/>
    <lineage>
        <taxon>Bacteria</taxon>
        <taxon>Pseudomonadati</taxon>
        <taxon>Spirochaetota</taxon>
        <taxon>Spirochaetia</taxon>
        <taxon>Leptospirales</taxon>
        <taxon>Leptospiraceae</taxon>
        <taxon>Leptospira</taxon>
    </lineage>
</organism>
<comment type="function">
    <text evidence="1">Binds to DNA and alters its conformation. May be involved in regulation of gene expression, nucleoid organization and DNA protection.</text>
</comment>
<comment type="subunit">
    <text evidence="1">Homodimer.</text>
</comment>
<comment type="subcellular location">
    <subcellularLocation>
        <location evidence="1">Cytoplasm</location>
        <location evidence="1">Nucleoid</location>
    </subcellularLocation>
</comment>
<comment type="similarity">
    <text evidence="1">Belongs to the YbaB/EbfC family.</text>
</comment>
<proteinExistence type="inferred from homology"/>
<keyword id="KW-0963">Cytoplasm</keyword>
<keyword id="KW-0238">DNA-binding</keyword>
<dbReference type="EMBL" id="CP000350">
    <property type="protein sequence ID" value="ABJ77390.1"/>
    <property type="molecule type" value="Genomic_DNA"/>
</dbReference>
<dbReference type="RefSeq" id="WP_002730501.1">
    <property type="nucleotide sequence ID" value="NC_008510.1"/>
</dbReference>
<dbReference type="SMR" id="Q04NY0"/>
<dbReference type="KEGG" id="lbj:LBJ_3002"/>
<dbReference type="HOGENOM" id="CLU_140930_0_1_12"/>
<dbReference type="Proteomes" id="UP000000656">
    <property type="component" value="Chromosome 1"/>
</dbReference>
<dbReference type="GO" id="GO:0043590">
    <property type="term" value="C:bacterial nucleoid"/>
    <property type="evidence" value="ECO:0007669"/>
    <property type="project" value="UniProtKB-UniRule"/>
</dbReference>
<dbReference type="GO" id="GO:0005829">
    <property type="term" value="C:cytosol"/>
    <property type="evidence" value="ECO:0007669"/>
    <property type="project" value="TreeGrafter"/>
</dbReference>
<dbReference type="GO" id="GO:0003677">
    <property type="term" value="F:DNA binding"/>
    <property type="evidence" value="ECO:0007669"/>
    <property type="project" value="UniProtKB-UniRule"/>
</dbReference>
<dbReference type="FunFam" id="3.30.1310.10:FF:000006">
    <property type="entry name" value="Nucleoid-associated protein LEP1GSC116_0101"/>
    <property type="match status" value="1"/>
</dbReference>
<dbReference type="Gene3D" id="3.30.1310.10">
    <property type="entry name" value="Nucleoid-associated protein YbaB-like domain"/>
    <property type="match status" value="1"/>
</dbReference>
<dbReference type="HAMAP" id="MF_00274">
    <property type="entry name" value="DNA_YbaB_EbfC"/>
    <property type="match status" value="1"/>
</dbReference>
<dbReference type="InterPro" id="IPR036894">
    <property type="entry name" value="YbaB-like_sf"/>
</dbReference>
<dbReference type="InterPro" id="IPR004401">
    <property type="entry name" value="YbaB/EbfC"/>
</dbReference>
<dbReference type="NCBIfam" id="TIGR00103">
    <property type="entry name" value="DNA_YbaB_EbfC"/>
    <property type="match status" value="1"/>
</dbReference>
<dbReference type="PANTHER" id="PTHR33449">
    <property type="entry name" value="NUCLEOID-ASSOCIATED PROTEIN YBAB"/>
    <property type="match status" value="1"/>
</dbReference>
<dbReference type="PANTHER" id="PTHR33449:SF1">
    <property type="entry name" value="NUCLEOID-ASSOCIATED PROTEIN YBAB"/>
    <property type="match status" value="1"/>
</dbReference>
<dbReference type="Pfam" id="PF02575">
    <property type="entry name" value="YbaB_DNA_bd"/>
    <property type="match status" value="1"/>
</dbReference>
<dbReference type="PIRSF" id="PIRSF004555">
    <property type="entry name" value="UCP004555"/>
    <property type="match status" value="1"/>
</dbReference>
<dbReference type="SUPFAM" id="SSF82607">
    <property type="entry name" value="YbaB-like"/>
    <property type="match status" value="1"/>
</dbReference>
<feature type="chain" id="PRO_1000003764" description="Nucleoid-associated protein LBJ_3002">
    <location>
        <begin position="1"/>
        <end position="115"/>
    </location>
</feature>